<dbReference type="EMBL" id="CP000058">
    <property type="protein sequence ID" value="AAZ35116.1"/>
    <property type="molecule type" value="Genomic_DNA"/>
</dbReference>
<dbReference type="RefSeq" id="WP_002555420.1">
    <property type="nucleotide sequence ID" value="NC_005773.3"/>
</dbReference>
<dbReference type="SMR" id="Q48DC8"/>
<dbReference type="KEGG" id="psp:PSPPH_4497"/>
<dbReference type="eggNOG" id="COG0830">
    <property type="taxonomic scope" value="Bacteria"/>
</dbReference>
<dbReference type="HOGENOM" id="CLU_049215_2_1_6"/>
<dbReference type="Proteomes" id="UP000000551">
    <property type="component" value="Chromosome"/>
</dbReference>
<dbReference type="GO" id="GO:0005737">
    <property type="term" value="C:cytoplasm"/>
    <property type="evidence" value="ECO:0007669"/>
    <property type="project" value="UniProtKB-SubCell"/>
</dbReference>
<dbReference type="GO" id="GO:0016151">
    <property type="term" value="F:nickel cation binding"/>
    <property type="evidence" value="ECO:0007669"/>
    <property type="project" value="UniProtKB-UniRule"/>
</dbReference>
<dbReference type="Gene3D" id="1.10.4190.10">
    <property type="entry name" value="Urease accessory protein UreF"/>
    <property type="match status" value="1"/>
</dbReference>
<dbReference type="HAMAP" id="MF_01385">
    <property type="entry name" value="UreF"/>
    <property type="match status" value="1"/>
</dbReference>
<dbReference type="InterPro" id="IPR002639">
    <property type="entry name" value="UreF"/>
</dbReference>
<dbReference type="InterPro" id="IPR038277">
    <property type="entry name" value="UreF_sf"/>
</dbReference>
<dbReference type="PANTHER" id="PTHR33620">
    <property type="entry name" value="UREASE ACCESSORY PROTEIN F"/>
    <property type="match status" value="1"/>
</dbReference>
<dbReference type="PANTHER" id="PTHR33620:SF1">
    <property type="entry name" value="UREASE ACCESSORY PROTEIN F"/>
    <property type="match status" value="1"/>
</dbReference>
<dbReference type="Pfam" id="PF01730">
    <property type="entry name" value="UreF"/>
    <property type="match status" value="1"/>
</dbReference>
<dbReference type="PIRSF" id="PIRSF009467">
    <property type="entry name" value="Ureas_acces_UreF"/>
    <property type="match status" value="1"/>
</dbReference>
<sequence>MNSAWALLRLASPQLPIGGYSYSQGLEMAVEQSIVVDPQTAGRWISDQLLLNLARFEAPLLLAHCEAASAGDWGQLLQVSEQHRASRETRELHQESRQMGYSLQQLLNGLPELDRDARHFLEQTAEPHLALGWALAARAWQISPQDALAAWLWSWLENQLAVLMKTLPLGQQAAQRLTSELLPLLQQAQVNATRQDTHHAGSAAFGLSLASMAHERQYSRLFRS</sequence>
<accession>Q48DC8</accession>
<organism>
    <name type="scientific">Pseudomonas savastanoi pv. phaseolicola (strain 1448A / Race 6)</name>
    <name type="common">Pseudomonas syringae pv. phaseolicola (strain 1448A / Race 6)</name>
    <dbReference type="NCBI Taxonomy" id="264730"/>
    <lineage>
        <taxon>Bacteria</taxon>
        <taxon>Pseudomonadati</taxon>
        <taxon>Pseudomonadota</taxon>
        <taxon>Gammaproteobacteria</taxon>
        <taxon>Pseudomonadales</taxon>
        <taxon>Pseudomonadaceae</taxon>
        <taxon>Pseudomonas</taxon>
    </lineage>
</organism>
<proteinExistence type="inferred from homology"/>
<feature type="chain" id="PRO_1000145133" description="Urease accessory protein UreF">
    <location>
        <begin position="1"/>
        <end position="224"/>
    </location>
</feature>
<keyword id="KW-0143">Chaperone</keyword>
<keyword id="KW-0963">Cytoplasm</keyword>
<keyword id="KW-0996">Nickel insertion</keyword>
<reference key="1">
    <citation type="journal article" date="2005" name="J. Bacteriol.">
        <title>Whole-genome sequence analysis of Pseudomonas syringae pv. phaseolicola 1448A reveals divergence among pathovars in genes involved in virulence and transposition.</title>
        <authorList>
            <person name="Joardar V."/>
            <person name="Lindeberg M."/>
            <person name="Jackson R.W."/>
            <person name="Selengut J."/>
            <person name="Dodson R."/>
            <person name="Brinkac L.M."/>
            <person name="Daugherty S.C."/>
            <person name="DeBoy R.T."/>
            <person name="Durkin A.S."/>
            <person name="Gwinn Giglio M."/>
            <person name="Madupu R."/>
            <person name="Nelson W.C."/>
            <person name="Rosovitz M.J."/>
            <person name="Sullivan S.A."/>
            <person name="Crabtree J."/>
            <person name="Creasy T."/>
            <person name="Davidsen T.M."/>
            <person name="Haft D.H."/>
            <person name="Zafar N."/>
            <person name="Zhou L."/>
            <person name="Halpin R."/>
            <person name="Holley T."/>
            <person name="Khouri H.M."/>
            <person name="Feldblyum T.V."/>
            <person name="White O."/>
            <person name="Fraser C.M."/>
            <person name="Chatterjee A.K."/>
            <person name="Cartinhour S."/>
            <person name="Schneider D."/>
            <person name="Mansfield J.W."/>
            <person name="Collmer A."/>
            <person name="Buell R."/>
        </authorList>
    </citation>
    <scope>NUCLEOTIDE SEQUENCE [LARGE SCALE GENOMIC DNA]</scope>
    <source>
        <strain>1448A / Race 6</strain>
    </source>
</reference>
<name>UREF_PSE14</name>
<gene>
    <name evidence="1" type="primary">ureF</name>
    <name type="ordered locus">PSPPH_4497</name>
</gene>
<comment type="function">
    <text evidence="1">Required for maturation of urease via the functional incorporation of the urease nickel metallocenter.</text>
</comment>
<comment type="subunit">
    <text evidence="1">UreD, UreF and UreG form a complex that acts as a GTP-hydrolysis-dependent molecular chaperone, activating the urease apoprotein by helping to assemble the nickel containing metallocenter of UreC. The UreE protein probably delivers the nickel.</text>
</comment>
<comment type="subcellular location">
    <subcellularLocation>
        <location evidence="1">Cytoplasm</location>
    </subcellularLocation>
</comment>
<comment type="similarity">
    <text evidence="1">Belongs to the UreF family.</text>
</comment>
<evidence type="ECO:0000255" key="1">
    <source>
        <dbReference type="HAMAP-Rule" id="MF_01385"/>
    </source>
</evidence>
<protein>
    <recommendedName>
        <fullName evidence="1">Urease accessory protein UreF</fullName>
    </recommendedName>
</protein>